<reference key="1">
    <citation type="journal article" date="2002" name="Zool. Sci.">
        <title>The primary structure of hemoglobin D from the Aldabra giant tortoise, Geochelone gigantea.</title>
        <authorList>
            <person name="Shishikura F."/>
        </authorList>
    </citation>
    <scope>NUCLEOTIDE SEQUENCE [GENOMIC DNA]</scope>
    <scope>PROTEIN SEQUENCE</scope>
    <source>
        <tissue>Erythrocyte</tissue>
    </source>
</reference>
<accession>P83124</accession>
<accession>Q5CD79</accession>
<comment type="function">
    <text>Involved in oxygen transport from the lung to the various peripheral tissues.</text>
</comment>
<comment type="subunit">
    <text>Heterotetramer of two alpha-D chains and two beta chains.</text>
</comment>
<comment type="tissue specificity">
    <text>Red blood cells.</text>
</comment>
<comment type="developmental stage">
    <text>In reptiles, the alpha-D chain occurs in a minor hemoglobin component, called hemoglobin d, which is expressed in late embryonic and adult life.</text>
</comment>
<comment type="similarity">
    <text evidence="1">Belongs to the globin family.</text>
</comment>
<dbReference type="EMBL" id="AB116521">
    <property type="protein sequence ID" value="BAC81726.1"/>
    <property type="molecule type" value="Genomic_DNA"/>
</dbReference>
<dbReference type="SMR" id="P83124"/>
<dbReference type="GO" id="GO:0072562">
    <property type="term" value="C:blood microparticle"/>
    <property type="evidence" value="ECO:0007669"/>
    <property type="project" value="TreeGrafter"/>
</dbReference>
<dbReference type="GO" id="GO:0031838">
    <property type="term" value="C:haptoglobin-hemoglobin complex"/>
    <property type="evidence" value="ECO:0007669"/>
    <property type="project" value="TreeGrafter"/>
</dbReference>
<dbReference type="GO" id="GO:0005833">
    <property type="term" value="C:hemoglobin complex"/>
    <property type="evidence" value="ECO:0007669"/>
    <property type="project" value="InterPro"/>
</dbReference>
<dbReference type="GO" id="GO:0031720">
    <property type="term" value="F:haptoglobin binding"/>
    <property type="evidence" value="ECO:0007669"/>
    <property type="project" value="TreeGrafter"/>
</dbReference>
<dbReference type="GO" id="GO:0020037">
    <property type="term" value="F:heme binding"/>
    <property type="evidence" value="ECO:0007669"/>
    <property type="project" value="InterPro"/>
</dbReference>
<dbReference type="GO" id="GO:0046872">
    <property type="term" value="F:metal ion binding"/>
    <property type="evidence" value="ECO:0007669"/>
    <property type="project" value="UniProtKB-KW"/>
</dbReference>
<dbReference type="GO" id="GO:0043177">
    <property type="term" value="F:organic acid binding"/>
    <property type="evidence" value="ECO:0007669"/>
    <property type="project" value="TreeGrafter"/>
</dbReference>
<dbReference type="GO" id="GO:0019825">
    <property type="term" value="F:oxygen binding"/>
    <property type="evidence" value="ECO:0007669"/>
    <property type="project" value="InterPro"/>
</dbReference>
<dbReference type="GO" id="GO:0005344">
    <property type="term" value="F:oxygen carrier activity"/>
    <property type="evidence" value="ECO:0007669"/>
    <property type="project" value="UniProtKB-KW"/>
</dbReference>
<dbReference type="GO" id="GO:0004601">
    <property type="term" value="F:peroxidase activity"/>
    <property type="evidence" value="ECO:0007669"/>
    <property type="project" value="TreeGrafter"/>
</dbReference>
<dbReference type="GO" id="GO:0042744">
    <property type="term" value="P:hydrogen peroxide catabolic process"/>
    <property type="evidence" value="ECO:0007669"/>
    <property type="project" value="TreeGrafter"/>
</dbReference>
<dbReference type="CDD" id="cd08927">
    <property type="entry name" value="Hb-alpha-like"/>
    <property type="match status" value="1"/>
</dbReference>
<dbReference type="FunFam" id="1.10.490.10:FF:000002">
    <property type="entry name" value="Hemoglobin subunit alpha"/>
    <property type="match status" value="1"/>
</dbReference>
<dbReference type="Gene3D" id="1.10.490.10">
    <property type="entry name" value="Globins"/>
    <property type="match status" value="1"/>
</dbReference>
<dbReference type="InterPro" id="IPR000971">
    <property type="entry name" value="Globin"/>
</dbReference>
<dbReference type="InterPro" id="IPR009050">
    <property type="entry name" value="Globin-like_sf"/>
</dbReference>
<dbReference type="InterPro" id="IPR012292">
    <property type="entry name" value="Globin/Proto"/>
</dbReference>
<dbReference type="InterPro" id="IPR002338">
    <property type="entry name" value="Hemoglobin_a-typ"/>
</dbReference>
<dbReference type="InterPro" id="IPR050056">
    <property type="entry name" value="Hemoglobin_oxygen_transport"/>
</dbReference>
<dbReference type="PANTHER" id="PTHR11442">
    <property type="entry name" value="HEMOGLOBIN FAMILY MEMBER"/>
    <property type="match status" value="1"/>
</dbReference>
<dbReference type="PANTHER" id="PTHR11442:SF41">
    <property type="entry name" value="HEMOGLOBIN SUBUNIT ZETA"/>
    <property type="match status" value="1"/>
</dbReference>
<dbReference type="Pfam" id="PF00042">
    <property type="entry name" value="Globin"/>
    <property type="match status" value="1"/>
</dbReference>
<dbReference type="PRINTS" id="PR00612">
    <property type="entry name" value="ALPHAHAEM"/>
</dbReference>
<dbReference type="SUPFAM" id="SSF46458">
    <property type="entry name" value="Globin-like"/>
    <property type="match status" value="1"/>
</dbReference>
<dbReference type="PROSITE" id="PS01033">
    <property type="entry name" value="GLOBIN"/>
    <property type="match status" value="1"/>
</dbReference>
<gene>
    <name type="primary">HBAD</name>
</gene>
<name>HBAD_CHENI</name>
<keyword id="KW-0903">Direct protein sequencing</keyword>
<keyword id="KW-0349">Heme</keyword>
<keyword id="KW-0408">Iron</keyword>
<keyword id="KW-0479">Metal-binding</keyword>
<keyword id="KW-0561">Oxygen transport</keyword>
<keyword id="KW-0813">Transport</keyword>
<feature type="chain" id="PRO_0000052830" description="Hemoglobin subunit alpha-D">
    <location>
        <begin position="1"/>
        <end position="141"/>
    </location>
</feature>
<feature type="domain" description="Globin" evidence="1">
    <location>
        <begin position="1"/>
        <end position="141"/>
    </location>
</feature>
<feature type="binding site" description="distal binding residue">
    <location>
        <position position="58"/>
    </location>
    <ligand>
        <name>heme b</name>
        <dbReference type="ChEBI" id="CHEBI:60344"/>
    </ligand>
    <ligandPart>
        <name>Fe</name>
        <dbReference type="ChEBI" id="CHEBI:18248"/>
    </ligandPart>
</feature>
<feature type="binding site" description="proximal binding residue">
    <location>
        <position position="87"/>
    </location>
    <ligand>
        <name>heme b</name>
        <dbReference type="ChEBI" id="CHEBI:60344"/>
    </ligand>
    <ligandPart>
        <name>Fe</name>
        <dbReference type="ChEBI" id="CHEBI:18248"/>
    </ligandPart>
</feature>
<feature type="sequence conflict" description="In Ref. 1; AA sequence." evidence="2" ref="1">
    <original>T</original>
    <variation>K</variation>
    <location>
        <position position="16"/>
    </location>
</feature>
<feature type="sequence conflict" description="In Ref. 1; AA sequence." evidence="2" ref="1">
    <original>T</original>
    <variation>I</variation>
    <location>
        <position position="34"/>
    </location>
</feature>
<feature type="sequence conflict" description="In Ref. 1; AA sequence." evidence="2" ref="1">
    <original>G</original>
    <variation>D</variation>
    <location>
        <position position="51"/>
    </location>
</feature>
<feature type="sequence conflict" description="In Ref. 1; AA sequence." evidence="2" ref="1">
    <original>R</original>
    <variation>K</variation>
    <location>
        <position position="71"/>
    </location>
</feature>
<feature type="sequence conflict" description="In Ref. 1; AA sequence." evidence="2" ref="1">
    <original>D</original>
    <variation>N</variation>
    <location>
        <position position="75"/>
    </location>
</feature>
<proteinExistence type="evidence at protein level"/>
<organism>
    <name type="scientific">Chelonoidis niger</name>
    <name type="common">Galapagos giant tortoise</name>
    <name type="synonym">Geochelone nigra</name>
    <dbReference type="NCBI Taxonomy" id="66189"/>
    <lineage>
        <taxon>Eukaryota</taxon>
        <taxon>Metazoa</taxon>
        <taxon>Chordata</taxon>
        <taxon>Craniata</taxon>
        <taxon>Vertebrata</taxon>
        <taxon>Euteleostomi</taxon>
        <taxon>Archelosauria</taxon>
        <taxon>Testudinata</taxon>
        <taxon>Testudines</taxon>
        <taxon>Cryptodira</taxon>
        <taxon>Durocryptodira</taxon>
        <taxon>Testudinoidea</taxon>
        <taxon>Testudinidae</taxon>
        <taxon>Chelonoidis</taxon>
    </lineage>
</organism>
<evidence type="ECO:0000255" key="1">
    <source>
        <dbReference type="PROSITE-ProRule" id="PRU00238"/>
    </source>
</evidence>
<evidence type="ECO:0000305" key="2"/>
<sequence>MLTEDDKQLIQHVWETVLEHQEDFGAEALERMFTVYPSTKTYFPHFDLHHGSEQIRHHGKKVVGALGDAVRHIDDLSATLSELSNLHAYNLRVDPVNFKLLSHCFQVVLGAHLGREYTPQVQVAYDKFLAAVSAVLAEKYR</sequence>
<protein>
    <recommendedName>
        <fullName>Hemoglobin subunit alpha-D</fullName>
    </recommendedName>
    <alternativeName>
        <fullName>Alpha-D-globin</fullName>
    </alternativeName>
    <alternativeName>
        <fullName>Hemoglobin alpha-D chain</fullName>
    </alternativeName>
</protein>